<dbReference type="EC" id="4.1.1.39" evidence="1"/>
<dbReference type="EMBL" id="EU189132">
    <property type="protein sequence ID" value="ABW83707.1"/>
    <property type="molecule type" value="Genomic_DNA"/>
</dbReference>
<dbReference type="RefSeq" id="YP_001542543.1">
    <property type="nucleotide sequence ID" value="NC_009963.1"/>
</dbReference>
<dbReference type="SMR" id="A8W3D6"/>
<dbReference type="GeneID" id="5729685"/>
<dbReference type="GO" id="GO:0009536">
    <property type="term" value="C:plastid"/>
    <property type="evidence" value="ECO:0007669"/>
    <property type="project" value="UniProtKB-SubCell"/>
</dbReference>
<dbReference type="GO" id="GO:0000287">
    <property type="term" value="F:magnesium ion binding"/>
    <property type="evidence" value="ECO:0007669"/>
    <property type="project" value="UniProtKB-UniRule"/>
</dbReference>
<dbReference type="GO" id="GO:0004497">
    <property type="term" value="F:monooxygenase activity"/>
    <property type="evidence" value="ECO:0007669"/>
    <property type="project" value="UniProtKB-KW"/>
</dbReference>
<dbReference type="GO" id="GO:0016984">
    <property type="term" value="F:ribulose-bisphosphate carboxylase activity"/>
    <property type="evidence" value="ECO:0007669"/>
    <property type="project" value="UniProtKB-UniRule"/>
</dbReference>
<dbReference type="GO" id="GO:0009853">
    <property type="term" value="P:photorespiration"/>
    <property type="evidence" value="ECO:0007669"/>
    <property type="project" value="UniProtKB-KW"/>
</dbReference>
<dbReference type="GO" id="GO:0019253">
    <property type="term" value="P:reductive pentose-phosphate cycle"/>
    <property type="evidence" value="ECO:0007669"/>
    <property type="project" value="UniProtKB-UniRule"/>
</dbReference>
<dbReference type="CDD" id="cd08212">
    <property type="entry name" value="RuBisCO_large_I"/>
    <property type="match status" value="1"/>
</dbReference>
<dbReference type="FunFam" id="3.20.20.110:FF:000001">
    <property type="entry name" value="Ribulose bisphosphate carboxylase large chain"/>
    <property type="match status" value="1"/>
</dbReference>
<dbReference type="FunFam" id="3.30.70.150:FF:000001">
    <property type="entry name" value="Ribulose bisphosphate carboxylase large chain"/>
    <property type="match status" value="1"/>
</dbReference>
<dbReference type="Gene3D" id="3.20.20.110">
    <property type="entry name" value="Ribulose bisphosphate carboxylase, large subunit, C-terminal domain"/>
    <property type="match status" value="1"/>
</dbReference>
<dbReference type="Gene3D" id="3.30.70.150">
    <property type="entry name" value="RuBisCO large subunit, N-terminal domain"/>
    <property type="match status" value="1"/>
</dbReference>
<dbReference type="HAMAP" id="MF_01338">
    <property type="entry name" value="RuBisCO_L_type1"/>
    <property type="match status" value="1"/>
</dbReference>
<dbReference type="InterPro" id="IPR033966">
    <property type="entry name" value="RuBisCO"/>
</dbReference>
<dbReference type="InterPro" id="IPR020878">
    <property type="entry name" value="RuBisCo_large_chain_AS"/>
</dbReference>
<dbReference type="InterPro" id="IPR000685">
    <property type="entry name" value="RuBisCO_lsu_C"/>
</dbReference>
<dbReference type="InterPro" id="IPR036376">
    <property type="entry name" value="RuBisCO_lsu_C_sf"/>
</dbReference>
<dbReference type="InterPro" id="IPR017443">
    <property type="entry name" value="RuBisCO_lsu_fd_N"/>
</dbReference>
<dbReference type="InterPro" id="IPR036422">
    <property type="entry name" value="RuBisCO_lsu_N_sf"/>
</dbReference>
<dbReference type="InterPro" id="IPR020888">
    <property type="entry name" value="RuBisCO_lsuI"/>
</dbReference>
<dbReference type="NCBIfam" id="NF003252">
    <property type="entry name" value="PRK04208.1"/>
    <property type="match status" value="1"/>
</dbReference>
<dbReference type="PANTHER" id="PTHR42704">
    <property type="entry name" value="RIBULOSE BISPHOSPHATE CARBOXYLASE"/>
    <property type="match status" value="1"/>
</dbReference>
<dbReference type="PANTHER" id="PTHR42704:SF16">
    <property type="entry name" value="RIBULOSE BISPHOSPHATE CARBOXYLASE LARGE CHAIN"/>
    <property type="match status" value="1"/>
</dbReference>
<dbReference type="Pfam" id="PF00016">
    <property type="entry name" value="RuBisCO_large"/>
    <property type="match status" value="1"/>
</dbReference>
<dbReference type="Pfam" id="PF02788">
    <property type="entry name" value="RuBisCO_large_N"/>
    <property type="match status" value="1"/>
</dbReference>
<dbReference type="SFLD" id="SFLDG01052">
    <property type="entry name" value="RuBisCO"/>
    <property type="match status" value="1"/>
</dbReference>
<dbReference type="SFLD" id="SFLDS00014">
    <property type="entry name" value="RuBisCO"/>
    <property type="match status" value="1"/>
</dbReference>
<dbReference type="SFLD" id="SFLDG00301">
    <property type="entry name" value="RuBisCO-like_proteins"/>
    <property type="match status" value="1"/>
</dbReference>
<dbReference type="SUPFAM" id="SSF51649">
    <property type="entry name" value="RuBisCo, C-terminal domain"/>
    <property type="match status" value="1"/>
</dbReference>
<dbReference type="SUPFAM" id="SSF54966">
    <property type="entry name" value="RuBisCO, large subunit, small (N-terminal) domain"/>
    <property type="match status" value="1"/>
</dbReference>
<dbReference type="PROSITE" id="PS00157">
    <property type="entry name" value="RUBISCO_LARGE"/>
    <property type="match status" value="1"/>
</dbReference>
<keyword id="KW-0007">Acetylation</keyword>
<keyword id="KW-0113">Calvin cycle</keyword>
<keyword id="KW-0120">Carbon dioxide fixation</keyword>
<keyword id="KW-1015">Disulfide bond</keyword>
<keyword id="KW-0456">Lyase</keyword>
<keyword id="KW-0460">Magnesium</keyword>
<keyword id="KW-0479">Metal-binding</keyword>
<keyword id="KW-0488">Methylation</keyword>
<keyword id="KW-0503">Monooxygenase</keyword>
<keyword id="KW-0560">Oxidoreductase</keyword>
<keyword id="KW-0601">Photorespiration</keyword>
<keyword id="KW-0602">Photosynthesis</keyword>
<keyword id="KW-0934">Plastid</keyword>
<comment type="function">
    <text evidence="1">RuBisCO catalyzes two reactions: the carboxylation of D-ribulose 1,5-bisphosphate, the primary event in carbon dioxide fixation, as well as the oxidative fragmentation of the pentose substrate in the photorespiration process. Both reactions occur simultaneously and in competition at the same active site.</text>
</comment>
<comment type="catalytic activity">
    <reaction evidence="1">
        <text>2 (2R)-3-phosphoglycerate + 2 H(+) = D-ribulose 1,5-bisphosphate + CO2 + H2O</text>
        <dbReference type="Rhea" id="RHEA:23124"/>
        <dbReference type="ChEBI" id="CHEBI:15377"/>
        <dbReference type="ChEBI" id="CHEBI:15378"/>
        <dbReference type="ChEBI" id="CHEBI:16526"/>
        <dbReference type="ChEBI" id="CHEBI:57870"/>
        <dbReference type="ChEBI" id="CHEBI:58272"/>
        <dbReference type="EC" id="4.1.1.39"/>
    </reaction>
</comment>
<comment type="catalytic activity">
    <reaction evidence="1">
        <text>D-ribulose 1,5-bisphosphate + O2 = 2-phosphoglycolate + (2R)-3-phosphoglycerate + 2 H(+)</text>
        <dbReference type="Rhea" id="RHEA:36631"/>
        <dbReference type="ChEBI" id="CHEBI:15378"/>
        <dbReference type="ChEBI" id="CHEBI:15379"/>
        <dbReference type="ChEBI" id="CHEBI:57870"/>
        <dbReference type="ChEBI" id="CHEBI:58033"/>
        <dbReference type="ChEBI" id="CHEBI:58272"/>
    </reaction>
</comment>
<comment type="cofactor">
    <cofactor evidence="1">
        <name>Mg(2+)</name>
        <dbReference type="ChEBI" id="CHEBI:18420"/>
    </cofactor>
    <text evidence="1">Binds 1 Mg(2+) ion per subunit.</text>
</comment>
<comment type="subunit">
    <text evidence="1">Heterohexadecamer of 8 large chains and 8 small chains; disulfide-linked. The disulfide link is formed within the large subunit homodimers.</text>
</comment>
<comment type="subcellular location">
    <subcellularLocation>
        <location>Plastid</location>
    </subcellularLocation>
</comment>
<comment type="PTM">
    <text evidence="1">The disulfide bond which can form in the large chain dimeric partners within the hexadecamer appears to be associated with oxidative stress and protein turnover.</text>
</comment>
<comment type="miscellaneous">
    <text evidence="1">The basic functional RuBisCO is composed of a large chain homodimer in a 'head-to-tail' conformation. In form I RuBisCO this homodimer is arranged in a barrel-like tetramer with the small subunits forming a tetrameric 'cap' on each end of the 'barrel'.</text>
</comment>
<comment type="similarity">
    <text evidence="1">Belongs to the RuBisCO large chain family. Type I subfamily.</text>
</comment>
<comment type="caution">
    <text evidence="3">Young tissue from this organism is photosynthetic and contains some thylakoids, although the photosynthetic activity does not exceed the light compensation point.</text>
</comment>
<name>RBL_CUSEX</name>
<reference key="1">
    <citation type="journal article" date="2007" name="BMC Plant Biol.">
        <title>Complete plastid genome sequences suggest strong selection for retention of photosynthetic genes in the parasitic plant genus Cuscuta.</title>
        <authorList>
            <person name="McNeal J.R."/>
            <person name="Kuehl J.V."/>
            <person name="Boore J.L."/>
            <person name="dePamphilis C.W."/>
        </authorList>
    </citation>
    <scope>NUCLEOTIDE SEQUENCE [LARGE SCALE GENOMIC DNA]</scope>
</reference>
<proteinExistence type="inferred from homology"/>
<protein>
    <recommendedName>
        <fullName evidence="1">Ribulose bisphosphate carboxylase large chain</fullName>
        <shortName evidence="1">RuBisCO large subunit</shortName>
        <ecNumber evidence="1">4.1.1.39</ecNumber>
    </recommendedName>
</protein>
<gene>
    <name evidence="1" type="primary">rbcL</name>
</gene>
<accession>A8W3D6</accession>
<evidence type="ECO:0000255" key="1">
    <source>
        <dbReference type="HAMAP-Rule" id="MF_01338"/>
    </source>
</evidence>
<evidence type="ECO:0000256" key="2">
    <source>
        <dbReference type="SAM" id="MobiDB-lite"/>
    </source>
</evidence>
<evidence type="ECO:0000305" key="3"/>
<sequence>MSPQTETKASVGFKAGVKDYKLTYYTPDYETKDTDILAAFRVTPQPGVPPEEAGAAVAAESSTGTWTTVWTDGLTSLDRYKGRCYRIERVIGEKDQYIAYVAYPLDLFEEGSVTNLFTSIVGNVFGFKALRALRLEDLRIPPAYTKTFQGPPHGIQVERDKLNKYGRPLLGCTIKPKLGLSAKNYGRAVYECLRGGLDFTKDDENVNSQPFMRWRDRFLFCAEAIYKSQAETGEIKGHYLNATAGTCEEMLKRAFFARELGVPIIMHDYLTGGFTANTSLAHYCRENGLLLHIHRAMHAVIDRQKNHGIHFRVLAKALRLSGGDHIHSGTVVGKLEGEREITLGFVDLLRDDFVEQDRSRGIYFTQDWVSLPGVMPVASGGIHVWHMPALTEIFGDDSVLQFGGGTLGHPWGNAPGAVANRVALEACVQARNEGRDLAQEGNDIIRQAGKWSPELAAACEVWKEIRFDFKPVDTLDPNDKKQRDNEDTLADKFFGDKG</sequence>
<geneLocation type="plastid"/>
<organism>
    <name type="scientific">Cuscuta exaltata</name>
    <name type="common">Tall dodder</name>
    <dbReference type="NCBI Taxonomy" id="476139"/>
    <lineage>
        <taxon>Eukaryota</taxon>
        <taxon>Viridiplantae</taxon>
        <taxon>Streptophyta</taxon>
        <taxon>Embryophyta</taxon>
        <taxon>Tracheophyta</taxon>
        <taxon>Spermatophyta</taxon>
        <taxon>Magnoliopsida</taxon>
        <taxon>eudicotyledons</taxon>
        <taxon>Gunneridae</taxon>
        <taxon>Pentapetalae</taxon>
        <taxon>asterids</taxon>
        <taxon>lamiids</taxon>
        <taxon>Solanales</taxon>
        <taxon>Convolvulaceae</taxon>
        <taxon>Cuscuteae</taxon>
        <taxon>Cuscuta</taxon>
        <taxon>Cuscuta subgen. Monogynella</taxon>
    </lineage>
</organism>
<feature type="propeptide" id="PRO_0000355764" evidence="1">
    <location>
        <begin position="1"/>
        <end position="2"/>
    </location>
</feature>
<feature type="chain" id="PRO_0000355765" description="Ribulose bisphosphate carboxylase large chain">
    <location>
        <begin position="3"/>
        <end position="498"/>
    </location>
</feature>
<feature type="region of interest" description="Disordered" evidence="2">
    <location>
        <begin position="473"/>
        <end position="498"/>
    </location>
</feature>
<feature type="active site" description="Proton acceptor" evidence="1">
    <location>
        <position position="175"/>
    </location>
</feature>
<feature type="active site" description="Proton acceptor" evidence="1">
    <location>
        <position position="294"/>
    </location>
</feature>
<feature type="binding site" description="in homodimeric partner" evidence="1">
    <location>
        <position position="123"/>
    </location>
    <ligand>
        <name>substrate</name>
    </ligand>
</feature>
<feature type="binding site" evidence="1">
    <location>
        <position position="173"/>
    </location>
    <ligand>
        <name>substrate</name>
    </ligand>
</feature>
<feature type="binding site" evidence="1">
    <location>
        <position position="177"/>
    </location>
    <ligand>
        <name>substrate</name>
    </ligand>
</feature>
<feature type="binding site" description="via carbamate group" evidence="1">
    <location>
        <position position="201"/>
    </location>
    <ligand>
        <name>Mg(2+)</name>
        <dbReference type="ChEBI" id="CHEBI:18420"/>
    </ligand>
</feature>
<feature type="binding site" evidence="1">
    <location>
        <position position="203"/>
    </location>
    <ligand>
        <name>Mg(2+)</name>
        <dbReference type="ChEBI" id="CHEBI:18420"/>
    </ligand>
</feature>
<feature type="binding site" evidence="1">
    <location>
        <position position="204"/>
    </location>
    <ligand>
        <name>Mg(2+)</name>
        <dbReference type="ChEBI" id="CHEBI:18420"/>
    </ligand>
</feature>
<feature type="binding site" evidence="1">
    <location>
        <position position="295"/>
    </location>
    <ligand>
        <name>substrate</name>
    </ligand>
</feature>
<feature type="binding site" evidence="1">
    <location>
        <position position="327"/>
    </location>
    <ligand>
        <name>substrate</name>
    </ligand>
</feature>
<feature type="binding site" evidence="1">
    <location>
        <position position="379"/>
    </location>
    <ligand>
        <name>substrate</name>
    </ligand>
</feature>
<feature type="site" description="Transition state stabilizer" evidence="1">
    <location>
        <position position="334"/>
    </location>
</feature>
<feature type="modified residue" description="N-acetylproline" evidence="1">
    <location>
        <position position="3"/>
    </location>
</feature>
<feature type="modified residue" description="N6,N6,N6-trimethyllysine" evidence="1">
    <location>
        <position position="14"/>
    </location>
</feature>
<feature type="modified residue" description="N6-carboxylysine" evidence="1">
    <location>
        <position position="201"/>
    </location>
</feature>
<feature type="disulfide bond" description="Interchain; in linked form" evidence="1">
    <location>
        <position position="247"/>
    </location>
</feature>